<accession>Q864G3</accession>
<feature type="chain" id="PRO_0000069786" description="Melanocyte-stimulating hormone receptor">
    <location>
        <begin position="1"/>
        <end position="317"/>
    </location>
</feature>
<feature type="topological domain" description="Extracellular" evidence="2">
    <location>
        <begin position="1"/>
        <end position="37"/>
    </location>
</feature>
<feature type="transmembrane region" description="Helical; Name=1" evidence="2">
    <location>
        <begin position="38"/>
        <end position="63"/>
    </location>
</feature>
<feature type="topological domain" description="Cytoplasmic" evidence="2">
    <location>
        <begin position="64"/>
        <end position="72"/>
    </location>
</feature>
<feature type="transmembrane region" description="Helical; Name=2" evidence="2">
    <location>
        <begin position="73"/>
        <end position="93"/>
    </location>
</feature>
<feature type="topological domain" description="Extracellular" evidence="2">
    <location>
        <begin position="94"/>
        <end position="118"/>
    </location>
</feature>
<feature type="transmembrane region" description="Helical; Name=3" evidence="2">
    <location>
        <begin position="119"/>
        <end position="140"/>
    </location>
</feature>
<feature type="topological domain" description="Cytoplasmic" evidence="2">
    <location>
        <begin position="141"/>
        <end position="163"/>
    </location>
</feature>
<feature type="transmembrane region" description="Helical; Name=4" evidence="2">
    <location>
        <begin position="164"/>
        <end position="183"/>
    </location>
</feature>
<feature type="topological domain" description="Extracellular" evidence="2">
    <location>
        <begin position="184"/>
        <end position="191"/>
    </location>
</feature>
<feature type="transmembrane region" description="Helical; Name=5" evidence="2">
    <location>
        <begin position="192"/>
        <end position="211"/>
    </location>
</feature>
<feature type="topological domain" description="Cytoplasmic" evidence="2">
    <location>
        <begin position="212"/>
        <end position="240"/>
    </location>
</feature>
<feature type="transmembrane region" description="Helical; Name=6" evidence="2">
    <location>
        <begin position="241"/>
        <end position="266"/>
    </location>
</feature>
<feature type="topological domain" description="Extracellular" evidence="2">
    <location>
        <begin position="267"/>
        <end position="279"/>
    </location>
</feature>
<feature type="transmembrane region" description="Helical; Name=7" evidence="2">
    <location>
        <begin position="280"/>
        <end position="300"/>
    </location>
</feature>
<feature type="topological domain" description="Cytoplasmic" evidence="2">
    <location>
        <begin position="301"/>
        <end position="317"/>
    </location>
</feature>
<feature type="lipid moiety-binding region" description="S-palmitoyl cysteine" evidence="2">
    <location>
        <position position="315"/>
    </location>
</feature>
<feature type="glycosylation site" description="N-linked (GlcNAc...) asparagine" evidence="2">
    <location>
        <position position="29"/>
    </location>
</feature>
<keyword id="KW-1003">Cell membrane</keyword>
<keyword id="KW-0297">G-protein coupled receptor</keyword>
<keyword id="KW-0325">Glycoprotein</keyword>
<keyword id="KW-0449">Lipoprotein</keyword>
<keyword id="KW-0472">Membrane</keyword>
<keyword id="KW-0564">Palmitate</keyword>
<keyword id="KW-0675">Receptor</keyword>
<keyword id="KW-0807">Transducer</keyword>
<keyword id="KW-0812">Transmembrane</keyword>
<keyword id="KW-1133">Transmembrane helix</keyword>
<organism>
    <name type="scientific">Alouatta caraya</name>
    <name type="common">Black howler monkey</name>
    <dbReference type="NCBI Taxonomy" id="9502"/>
    <lineage>
        <taxon>Eukaryota</taxon>
        <taxon>Metazoa</taxon>
        <taxon>Chordata</taxon>
        <taxon>Craniata</taxon>
        <taxon>Vertebrata</taxon>
        <taxon>Euteleostomi</taxon>
        <taxon>Mammalia</taxon>
        <taxon>Eutheria</taxon>
        <taxon>Euarchontoglires</taxon>
        <taxon>Primates</taxon>
        <taxon>Haplorrhini</taxon>
        <taxon>Platyrrhini</taxon>
        <taxon>Atelidae</taxon>
        <taxon>Alouattinae</taxon>
        <taxon>Alouatta</taxon>
    </lineage>
</organism>
<evidence type="ECO:0000250" key="1">
    <source>
        <dbReference type="UniProtKB" id="Q01726"/>
    </source>
</evidence>
<evidence type="ECO:0000255" key="2"/>
<evidence type="ECO:0000255" key="3">
    <source>
        <dbReference type="PROSITE-ProRule" id="PRU00521"/>
    </source>
</evidence>
<sequence>MPMQGAQRRLLGSLNSTPTATPNLGLAANHTGAPCLEVSIPHGLFLSLGLVSLVENVLVVAAIAKNRNLHSPMYCFICCLALSDLLVSGSNMLETAVILLLEAGALATRASVVQQLQNTIDVLTCSSMLCSLCFLGAIAVDRYVSIFYALRYHSIVTLPRARRAIAAIWVASVLSSTLFIAYCDHAAVLLCLVVFFLAMLVLMAVLYVHMLARACQHAQGITRLHKRQLPAHQGFGLRGAATLTILLGIFFLCWGPFFLHLMLVVLCPQHLTCSCIFKNFKVFLTLIICNTIIDPLIYAFRSQELCRTLKEVLLCSW</sequence>
<gene>
    <name type="primary">MC1R</name>
</gene>
<protein>
    <recommendedName>
        <fullName>Melanocyte-stimulating hormone receptor</fullName>
        <shortName>MSH-R</shortName>
    </recommendedName>
    <alternativeName>
        <fullName>Melanocortin receptor 1</fullName>
        <shortName>MC1-R</shortName>
    </alternativeName>
</protein>
<proteinExistence type="inferred from homology"/>
<name>MSHR_ALOCA</name>
<dbReference type="EMBL" id="AY205134">
    <property type="protein sequence ID" value="AAP31008.1"/>
    <property type="molecule type" value="Genomic_DNA"/>
</dbReference>
<dbReference type="SMR" id="Q864G3"/>
<dbReference type="GlyCosmos" id="Q864G3">
    <property type="glycosylation" value="1 site, No reported glycans"/>
</dbReference>
<dbReference type="GO" id="GO:0005886">
    <property type="term" value="C:plasma membrane"/>
    <property type="evidence" value="ECO:0000250"/>
    <property type="project" value="UniProtKB"/>
</dbReference>
<dbReference type="GO" id="GO:0004980">
    <property type="term" value="F:melanocyte-stimulating hormone receptor activity"/>
    <property type="evidence" value="ECO:0007669"/>
    <property type="project" value="InterPro"/>
</dbReference>
<dbReference type="GO" id="GO:0007189">
    <property type="term" value="P:adenylate cyclase-activating G protein-coupled receptor signaling pathway"/>
    <property type="evidence" value="ECO:0007669"/>
    <property type="project" value="UniProtKB-ARBA"/>
</dbReference>
<dbReference type="FunFam" id="1.20.1070.10:FF:000211">
    <property type="entry name" value="Melanocyte-stimulating hormone receptor"/>
    <property type="match status" value="1"/>
</dbReference>
<dbReference type="Gene3D" id="1.20.1070.10">
    <property type="entry name" value="Rhodopsin 7-helix transmembrane proteins"/>
    <property type="match status" value="1"/>
</dbReference>
<dbReference type="InterPro" id="IPR000276">
    <property type="entry name" value="GPCR_Rhodpsn"/>
</dbReference>
<dbReference type="InterPro" id="IPR017452">
    <property type="entry name" value="GPCR_Rhodpsn_7TM"/>
</dbReference>
<dbReference type="InterPro" id="IPR001671">
    <property type="entry name" value="Melcrt_ACTH_rcpt"/>
</dbReference>
<dbReference type="InterPro" id="IPR000761">
    <property type="entry name" value="MSH_rcpt"/>
</dbReference>
<dbReference type="PANTHER" id="PTHR22750">
    <property type="entry name" value="G-PROTEIN COUPLED RECEPTOR"/>
    <property type="match status" value="1"/>
</dbReference>
<dbReference type="Pfam" id="PF00001">
    <property type="entry name" value="7tm_1"/>
    <property type="match status" value="2"/>
</dbReference>
<dbReference type="PRINTS" id="PR00237">
    <property type="entry name" value="GPCRRHODOPSN"/>
</dbReference>
<dbReference type="PRINTS" id="PR00534">
    <property type="entry name" value="MCRFAMILY"/>
</dbReference>
<dbReference type="PRINTS" id="PR00536">
    <property type="entry name" value="MELNOCYTESHR"/>
</dbReference>
<dbReference type="SMART" id="SM01381">
    <property type="entry name" value="7TM_GPCR_Srsx"/>
    <property type="match status" value="1"/>
</dbReference>
<dbReference type="SUPFAM" id="SSF81321">
    <property type="entry name" value="Family A G protein-coupled receptor-like"/>
    <property type="match status" value="1"/>
</dbReference>
<dbReference type="PROSITE" id="PS00237">
    <property type="entry name" value="G_PROTEIN_RECEP_F1_1"/>
    <property type="match status" value="1"/>
</dbReference>
<dbReference type="PROSITE" id="PS50262">
    <property type="entry name" value="G_PROTEIN_RECEP_F1_2"/>
    <property type="match status" value="1"/>
</dbReference>
<reference key="1">
    <citation type="journal article" date="2003" name="Am. J. Phys. Anthropol.">
        <title>Evolution of a pigmentation gene, the melanocortin-1 receptor, in primates.</title>
        <authorList>
            <person name="Mundy N.I."/>
            <person name="Kelly J."/>
        </authorList>
    </citation>
    <scope>NUCLEOTIDE SEQUENCE [GENOMIC DNA]</scope>
    <source>
        <strain>Isolate 2</strain>
    </source>
</reference>
<comment type="function">
    <text evidence="1">Receptor for MSH (alpha, beta and gamma) and ACTH. The activity of this receptor is mediated by G proteins which activate adenylate cyclase. Mediates melanogenesis, the production of eumelanin (black/brown) and phaeomelanin (red/yellow), via regulation of cAMP signaling in melanocytes.</text>
</comment>
<comment type="subunit">
    <text evidence="1">Interacts with MGRN1, but does not undergo MGRN1-mediated ubiquitination; this interaction competes with GNAS-binding and thus inhibits agonist-induced cAMP production. Interacts with OPN3; the interaction results in a decrease in MC1R-mediated cAMP signaling and ultimately a decrease in melanin production in melanocytes.</text>
</comment>
<comment type="subcellular location">
    <subcellularLocation>
        <location evidence="1">Cell membrane</location>
        <topology evidence="2">Multi-pass membrane protein</topology>
    </subcellularLocation>
</comment>
<comment type="similarity">
    <text evidence="3">Belongs to the G-protein coupled receptor 1 family.</text>
</comment>